<proteinExistence type="evidence at protein level"/>
<reference key="1">
    <citation type="journal article" date="1993" name="Genetics">
        <title>Molecular characterization of duplicate cytosolic phosphoglucose isomerase genes in Clarkia and comparison to the single gene in Arabidopsis.</title>
        <authorList>
            <person name="Thomas B.R."/>
            <person name="Ford V.S."/>
            <person name="Pichersky E."/>
            <person name="Gottlieb L.D."/>
        </authorList>
    </citation>
    <scope>NUCLEOTIDE SEQUENCE [GENOMIC DNA]</scope>
    <source>
        <strain>cv. Columbia</strain>
    </source>
</reference>
<reference key="2">
    <citation type="journal article" date="2002" name="Mol. Biol. Evol.">
        <title>The 5' leader of plant PgiC has an intron: the leader shows both the loss and maintenance of constraints compared with introns and exons in the coding region.</title>
        <authorList>
            <person name="Gottlieb L.D."/>
            <person name="Ford V.S."/>
        </authorList>
    </citation>
    <scope>NUCLEOTIDE SEQUENCE [MRNA]</scope>
    <source>
        <strain>cv. Columbia</strain>
    </source>
</reference>
<reference key="3">
    <citation type="journal article" date="2003" name="Mol. Biol. Evol.">
        <title>DNA polymorphism in active gene and pseudogene of the cytosolic phosphoglucose isomerase (PgiC) loci in Arabidopsis halleri ssp. gemmifera.</title>
        <authorList>
            <person name="Kawabe A."/>
            <person name="Miyashita N.T."/>
        </authorList>
    </citation>
    <scope>NUCLEOTIDE SEQUENCE [GENOMIC DNA]</scope>
    <source>
        <strain>Many cultivars</strain>
    </source>
</reference>
<reference key="4">
    <citation type="journal article" date="1997" name="DNA Res.">
        <title>Structural analysis of Arabidopsis thaliana chromosome 5. III. Sequence features of the regions of 1,191,918 bp covered by seventeen physically assigned P1 clones.</title>
        <authorList>
            <person name="Nakamura Y."/>
            <person name="Sato S."/>
            <person name="Kaneko T."/>
            <person name="Kotani H."/>
            <person name="Asamizu E."/>
            <person name="Miyajima N."/>
            <person name="Tabata S."/>
        </authorList>
    </citation>
    <scope>NUCLEOTIDE SEQUENCE [LARGE SCALE GENOMIC DNA]</scope>
    <source>
        <strain>cv. Columbia</strain>
    </source>
</reference>
<reference key="5">
    <citation type="journal article" date="2017" name="Plant J.">
        <title>Araport11: a complete reannotation of the Arabidopsis thaliana reference genome.</title>
        <authorList>
            <person name="Cheng C.Y."/>
            <person name="Krishnakumar V."/>
            <person name="Chan A.P."/>
            <person name="Thibaud-Nissen F."/>
            <person name="Schobel S."/>
            <person name="Town C.D."/>
        </authorList>
    </citation>
    <scope>GENOME REANNOTATION</scope>
    <source>
        <strain>cv. Columbia</strain>
    </source>
</reference>
<reference key="6">
    <citation type="journal article" date="2003" name="Science">
        <title>Empirical analysis of transcriptional activity in the Arabidopsis genome.</title>
        <authorList>
            <person name="Yamada K."/>
            <person name="Lim J."/>
            <person name="Dale J.M."/>
            <person name="Chen H."/>
            <person name="Shinn P."/>
            <person name="Palm C.J."/>
            <person name="Southwick A.M."/>
            <person name="Wu H.C."/>
            <person name="Kim C.J."/>
            <person name="Nguyen M."/>
            <person name="Pham P.K."/>
            <person name="Cheuk R.F."/>
            <person name="Karlin-Newmann G."/>
            <person name="Liu S.X."/>
            <person name="Lam B."/>
            <person name="Sakano H."/>
            <person name="Wu T."/>
            <person name="Yu G."/>
            <person name="Miranda M."/>
            <person name="Quach H.L."/>
            <person name="Tripp M."/>
            <person name="Chang C.H."/>
            <person name="Lee J.M."/>
            <person name="Toriumi M.J."/>
            <person name="Chan M.M."/>
            <person name="Tang C.C."/>
            <person name="Onodera C.S."/>
            <person name="Deng J.M."/>
            <person name="Akiyama K."/>
            <person name="Ansari Y."/>
            <person name="Arakawa T."/>
            <person name="Banh J."/>
            <person name="Banno F."/>
            <person name="Bowser L."/>
            <person name="Brooks S.Y."/>
            <person name="Carninci P."/>
            <person name="Chao Q."/>
            <person name="Choy N."/>
            <person name="Enju A."/>
            <person name="Goldsmith A.D."/>
            <person name="Gurjal M."/>
            <person name="Hansen N.F."/>
            <person name="Hayashizaki Y."/>
            <person name="Johnson-Hopson C."/>
            <person name="Hsuan V.W."/>
            <person name="Iida K."/>
            <person name="Karnes M."/>
            <person name="Khan S."/>
            <person name="Koesema E."/>
            <person name="Ishida J."/>
            <person name="Jiang P.X."/>
            <person name="Jones T."/>
            <person name="Kawai J."/>
            <person name="Kamiya A."/>
            <person name="Meyers C."/>
            <person name="Nakajima M."/>
            <person name="Narusaka M."/>
            <person name="Seki M."/>
            <person name="Sakurai T."/>
            <person name="Satou M."/>
            <person name="Tamse R."/>
            <person name="Vaysberg M."/>
            <person name="Wallender E.K."/>
            <person name="Wong C."/>
            <person name="Yamamura Y."/>
            <person name="Yuan S."/>
            <person name="Shinozaki K."/>
            <person name="Davis R.W."/>
            <person name="Theologis A."/>
            <person name="Ecker J.R."/>
        </authorList>
    </citation>
    <scope>NUCLEOTIDE SEQUENCE [LARGE SCALE MRNA]</scope>
    <source>
        <strain>cv. Columbia</strain>
    </source>
</reference>
<reference key="7">
    <citation type="journal article" date="2008" name="Plant Physiol.">
        <title>SUGAR-DEPENDENT6 encodes a mitochondrial flavin adenine dinucleotide-dependent glycerol-3-p dehydrogenase, which is required for glycerol catabolism and post germinative seedling growth in Arabidopsis.</title>
        <authorList>
            <person name="Quettier A.-L."/>
            <person name="Shaw E."/>
            <person name="Eastmond P.J."/>
        </authorList>
    </citation>
    <scope>ACTIVITY REGULATION</scope>
</reference>
<reference key="8">
    <citation type="journal article" date="2012" name="Mol. Cell. Proteomics">
        <title>Comparative large-scale characterisation of plant vs. mammal proteins reveals similar and idiosyncratic N-alpha acetylation features.</title>
        <authorList>
            <person name="Bienvenut W.V."/>
            <person name="Sumpton D."/>
            <person name="Martinez A."/>
            <person name="Lilla S."/>
            <person name="Espagne C."/>
            <person name="Meinnel T."/>
            <person name="Giglione C."/>
        </authorList>
    </citation>
    <scope>ACETYLATION [LARGE SCALE ANALYSIS] AT ALA-2</scope>
    <scope>CLEAVAGE OF INITIATOR METHIONINE [LARGE SCALE ANALYSIS]</scope>
    <scope>IDENTIFICATION BY MASS SPECTROMETRY [LARGE SCALE ANALYSIS]</scope>
</reference>
<feature type="initiator methionine" description="Removed" evidence="4">
    <location>
        <position position="1"/>
    </location>
</feature>
<feature type="chain" id="PRO_0000180550" description="Glucose-6-phosphate isomerase, cytosolic">
    <location>
        <begin position="2"/>
        <end position="560"/>
    </location>
</feature>
<feature type="active site" description="Proton donor" evidence="1">
    <location>
        <position position="361"/>
    </location>
</feature>
<feature type="active site" evidence="1">
    <location>
        <position position="392"/>
    </location>
</feature>
<feature type="active site" evidence="1">
    <location>
        <position position="517"/>
    </location>
</feature>
<feature type="modified residue" description="N-acetylalanine" evidence="4">
    <location>
        <position position="2"/>
    </location>
</feature>
<feature type="sequence variant" description="In strain: cv. Bus-1.">
    <original>S</original>
    <variation>P</variation>
    <location>
        <position position="3"/>
    </location>
</feature>
<feature type="sequence variant" description="In strain: cv. Ag-0, cv. Bus-1, cv. Dra-0, cv. Hiroshima and cv. Kas-1.">
    <original>T</original>
    <variation>P</variation>
    <location>
        <position position="5"/>
    </location>
</feature>
<feature type="sequence variant" description="In strain: cv. Bus-1.">
    <original>A</original>
    <variation>V</variation>
    <location>
        <position position="36"/>
    </location>
</feature>
<feature type="sequence variant" description="In strain: cv. Bl-1 and cv. In-0.">
    <original>S</original>
    <variation>A</variation>
    <location>
        <position position="73"/>
    </location>
</feature>
<feature type="sequence variant" description="In strain: cv. Bl-1 and cv. In-0.">
    <original>S</original>
    <variation>A</variation>
    <location>
        <position position="95"/>
    </location>
</feature>
<feature type="sequence variant" description="In strain: cv. Bus-1 and cv. Kas-1.">
    <original>V</original>
    <variation>I</variation>
    <location>
        <position position="99"/>
    </location>
</feature>
<feature type="sequence variant" description="In strain: cv. Hiroshima.">
    <original>K</original>
    <variation>E</variation>
    <location>
        <position position="105"/>
    </location>
</feature>
<feature type="sequence variant" description="In strain: cv. Bl-1 and cv. In-0.">
    <original>M</original>
    <variation>K</variation>
    <location>
        <position position="114"/>
    </location>
</feature>
<feature type="sequence variant" description="In strain: cv. Nok-4.">
    <original>E</original>
    <variation>D</variation>
    <location>
        <position position="119"/>
    </location>
</feature>
<feature type="sequence variant" description="In strain: cv. Bus-1.">
    <original>N</original>
    <variation>S</variation>
    <location>
        <position position="198"/>
    </location>
</feature>
<feature type="sequence variant" description="In strain: cv. Cvi-0.">
    <original>M</original>
    <variation>T</variation>
    <location>
        <position position="295"/>
    </location>
</feature>
<feature type="sequence variant" description="In strain: cv. WS-0.">
    <original>I</original>
    <variation>T</variation>
    <location>
        <position position="355"/>
    </location>
</feature>
<feature type="sequence variant" description="In strain: cv. Cvi-0.">
    <location>
        <position position="425"/>
    </location>
</feature>
<feature type="sequence variant" description="In strain: cv. Pog-0.">
    <original>L</original>
    <variation>F</variation>
    <location>
        <position position="431"/>
    </location>
</feature>
<feature type="sequence variant" description="In strain: cv. In-0.">
    <original>M</original>
    <variation>I</variation>
    <location>
        <position position="432"/>
    </location>
</feature>
<feature type="sequence variant" description="In strain: cv. Ost-0.">
    <original>H</original>
    <variation>Q</variation>
    <location>
        <position position="528"/>
    </location>
</feature>
<feature type="sequence conflict" description="In Ref. 6; AAK50107/AAM16223." evidence="3" ref="6">
    <original>F</original>
    <variation>S</variation>
    <location>
        <position position="216"/>
    </location>
</feature>
<protein>
    <recommendedName>
        <fullName>Glucose-6-phosphate isomerase, cytosolic</fullName>
        <shortName>GPI</shortName>
        <ecNumber>5.3.1.9</ecNumber>
    </recommendedName>
    <alternativeName>
        <fullName>Phosphoglucose isomerase</fullName>
        <shortName>PGI</shortName>
    </alternativeName>
    <alternativeName>
        <fullName>Phosphohexose isomerase</fullName>
        <shortName>PHI</shortName>
    </alternativeName>
</protein>
<accession>P34795</accession>
<accession>Q546J1</accession>
<accession>Q94JT1</accession>
<accession>Q9FE90</accession>
<accession>Q9FXM6</accession>
<accession>Q9FXM7</accession>
<accession>Q9FXM8</accession>
<accession>Q9FXM9</accession>
<accession>Q9FXN0</accession>
<accession>Q9FXN1</accession>
<accession>Q9FXN2</accession>
<accession>Q9FXN3</accession>
<accession>Q9FXN4</accession>
<accession>Q9FXN5</accession>
<dbReference type="EC" id="5.3.1.9"/>
<dbReference type="EMBL" id="X69195">
    <property type="protein sequence ID" value="CAA48940.1"/>
    <property type="molecule type" value="Genomic_DNA"/>
</dbReference>
<dbReference type="EMBL" id="AJ419524">
    <property type="protein sequence ID" value="CAD11677.1"/>
    <property type="molecule type" value="mRNA"/>
</dbReference>
<dbReference type="EMBL" id="AB044948">
    <property type="protein sequence ID" value="BAB17635.1"/>
    <property type="molecule type" value="Genomic_DNA"/>
</dbReference>
<dbReference type="EMBL" id="AB044949">
    <property type="protein sequence ID" value="BAB17636.1"/>
    <property type="molecule type" value="Genomic_DNA"/>
</dbReference>
<dbReference type="EMBL" id="AB044950">
    <property type="protein sequence ID" value="BAB17637.1"/>
    <property type="molecule type" value="Genomic_DNA"/>
</dbReference>
<dbReference type="EMBL" id="AB044951">
    <property type="protein sequence ID" value="BAB17638.1"/>
    <property type="molecule type" value="Genomic_DNA"/>
</dbReference>
<dbReference type="EMBL" id="AB044952">
    <property type="protein sequence ID" value="BAB17639.1"/>
    <property type="molecule type" value="Genomic_DNA"/>
</dbReference>
<dbReference type="EMBL" id="AB044953">
    <property type="protein sequence ID" value="BAB17640.1"/>
    <property type="molecule type" value="Genomic_DNA"/>
</dbReference>
<dbReference type="EMBL" id="AB044954">
    <property type="protein sequence ID" value="BAB17641.1"/>
    <property type="molecule type" value="Genomic_DNA"/>
</dbReference>
<dbReference type="EMBL" id="AB044955">
    <property type="protein sequence ID" value="BAB17642.1"/>
    <property type="molecule type" value="Genomic_DNA"/>
</dbReference>
<dbReference type="EMBL" id="AB044956">
    <property type="protein sequence ID" value="BAB17643.1"/>
    <property type="molecule type" value="Genomic_DNA"/>
</dbReference>
<dbReference type="EMBL" id="AB044957">
    <property type="protein sequence ID" value="BAB17644.1"/>
    <property type="molecule type" value="Genomic_DNA"/>
</dbReference>
<dbReference type="EMBL" id="AB044958">
    <property type="protein sequence ID" value="BAB17645.1"/>
    <property type="molecule type" value="Genomic_DNA"/>
</dbReference>
<dbReference type="EMBL" id="AB044959">
    <property type="protein sequence ID" value="BAB17646.1"/>
    <property type="molecule type" value="Genomic_DNA"/>
</dbReference>
<dbReference type="EMBL" id="AB044960">
    <property type="protein sequence ID" value="BAB17647.1"/>
    <property type="molecule type" value="Genomic_DNA"/>
</dbReference>
<dbReference type="EMBL" id="AB044961">
    <property type="protein sequence ID" value="BAB17648.1"/>
    <property type="molecule type" value="Genomic_DNA"/>
</dbReference>
<dbReference type="EMBL" id="AB044962">
    <property type="protein sequence ID" value="BAB17649.1"/>
    <property type="molecule type" value="Genomic_DNA"/>
</dbReference>
<dbReference type="EMBL" id="AB044963">
    <property type="protein sequence ID" value="BAB17650.1"/>
    <property type="molecule type" value="Genomic_DNA"/>
</dbReference>
<dbReference type="EMBL" id="AB044964">
    <property type="protein sequence ID" value="BAB17651.1"/>
    <property type="molecule type" value="Genomic_DNA"/>
</dbReference>
<dbReference type="EMBL" id="AB044965">
    <property type="protein sequence ID" value="BAB17652.1"/>
    <property type="molecule type" value="Genomic_DNA"/>
</dbReference>
<dbReference type="EMBL" id="AB044966">
    <property type="protein sequence ID" value="BAB17653.1"/>
    <property type="molecule type" value="Genomic_DNA"/>
</dbReference>
<dbReference type="EMBL" id="AB044967">
    <property type="protein sequence ID" value="BAB17654.1"/>
    <property type="molecule type" value="Genomic_DNA"/>
</dbReference>
<dbReference type="EMBL" id="AB007647">
    <property type="protein sequence ID" value="BAB10630.1"/>
    <property type="molecule type" value="Genomic_DNA"/>
</dbReference>
<dbReference type="EMBL" id="CP002688">
    <property type="protein sequence ID" value="AED94855.1"/>
    <property type="molecule type" value="Genomic_DNA"/>
</dbReference>
<dbReference type="EMBL" id="CP002688">
    <property type="protein sequence ID" value="ANM70583.1"/>
    <property type="molecule type" value="Genomic_DNA"/>
</dbReference>
<dbReference type="EMBL" id="AF372970">
    <property type="protein sequence ID" value="AAK50107.1"/>
    <property type="molecule type" value="mRNA"/>
</dbReference>
<dbReference type="EMBL" id="AY093962">
    <property type="protein sequence ID" value="AAM16223.1"/>
    <property type="molecule type" value="mRNA"/>
</dbReference>
<dbReference type="PIR" id="S41808">
    <property type="entry name" value="S41808"/>
</dbReference>
<dbReference type="RefSeq" id="NP_001332180.1">
    <property type="nucleotide sequence ID" value="NM_001344462.1"/>
</dbReference>
<dbReference type="RefSeq" id="NP_199088.1">
    <property type="nucleotide sequence ID" value="NM_123638.5"/>
</dbReference>
<dbReference type="SMR" id="P34795"/>
<dbReference type="BioGRID" id="19533">
    <property type="interactions" value="5"/>
</dbReference>
<dbReference type="FunCoup" id="P34795">
    <property type="interactions" value="3389"/>
</dbReference>
<dbReference type="STRING" id="3702.P34795"/>
<dbReference type="iPTMnet" id="P34795"/>
<dbReference type="MetOSite" id="P34795"/>
<dbReference type="PaxDb" id="3702-AT5G42740.1"/>
<dbReference type="ProteomicsDB" id="228960"/>
<dbReference type="EnsemblPlants" id="AT5G42740.1">
    <property type="protein sequence ID" value="AT5G42740.1"/>
    <property type="gene ID" value="AT5G42740"/>
</dbReference>
<dbReference type="EnsemblPlants" id="AT5G42740.2">
    <property type="protein sequence ID" value="AT5G42740.2"/>
    <property type="gene ID" value="AT5G42740"/>
</dbReference>
<dbReference type="GeneID" id="834283"/>
<dbReference type="Gramene" id="AT5G42740.1">
    <property type="protein sequence ID" value="AT5G42740.1"/>
    <property type="gene ID" value="AT5G42740"/>
</dbReference>
<dbReference type="Gramene" id="AT5G42740.2">
    <property type="protein sequence ID" value="AT5G42740.2"/>
    <property type="gene ID" value="AT5G42740"/>
</dbReference>
<dbReference type="KEGG" id="ath:AT5G42740"/>
<dbReference type="Araport" id="AT5G42740"/>
<dbReference type="TAIR" id="AT5G42740"/>
<dbReference type="eggNOG" id="KOG2446">
    <property type="taxonomic scope" value="Eukaryota"/>
</dbReference>
<dbReference type="HOGENOM" id="CLU_017947_4_0_1"/>
<dbReference type="InParanoid" id="P34795"/>
<dbReference type="OrthoDB" id="5831190at2759"/>
<dbReference type="PhylomeDB" id="P34795"/>
<dbReference type="BRENDA" id="5.3.1.9">
    <property type="organism ID" value="399"/>
</dbReference>
<dbReference type="UniPathway" id="UPA00109">
    <property type="reaction ID" value="UER00181"/>
</dbReference>
<dbReference type="CD-CODE" id="4299E36E">
    <property type="entry name" value="Nucleolus"/>
</dbReference>
<dbReference type="PRO" id="PR:P34795"/>
<dbReference type="Proteomes" id="UP000006548">
    <property type="component" value="Chromosome 5"/>
</dbReference>
<dbReference type="ExpressionAtlas" id="P34795">
    <property type="expression patterns" value="baseline and differential"/>
</dbReference>
<dbReference type="GO" id="GO:0005829">
    <property type="term" value="C:cytosol"/>
    <property type="evidence" value="ECO:0007005"/>
    <property type="project" value="TAIR"/>
</dbReference>
<dbReference type="GO" id="GO:0009536">
    <property type="term" value="C:plastid"/>
    <property type="evidence" value="ECO:0007005"/>
    <property type="project" value="TAIR"/>
</dbReference>
<dbReference type="GO" id="GO:0097367">
    <property type="term" value="F:carbohydrate derivative binding"/>
    <property type="evidence" value="ECO:0007669"/>
    <property type="project" value="InterPro"/>
</dbReference>
<dbReference type="GO" id="GO:0004347">
    <property type="term" value="F:glucose-6-phosphate isomerase activity"/>
    <property type="evidence" value="ECO:0007669"/>
    <property type="project" value="UniProtKB-EC"/>
</dbReference>
<dbReference type="GO" id="GO:0050832">
    <property type="term" value="P:defense response to fungus"/>
    <property type="evidence" value="ECO:0000314"/>
    <property type="project" value="TAIR"/>
</dbReference>
<dbReference type="GO" id="GO:0006094">
    <property type="term" value="P:gluconeogenesis"/>
    <property type="evidence" value="ECO:0007669"/>
    <property type="project" value="UniProtKB-KW"/>
</dbReference>
<dbReference type="GO" id="GO:0006096">
    <property type="term" value="P:glycolytic process"/>
    <property type="evidence" value="ECO:0007669"/>
    <property type="project" value="UniProtKB-UniPathway"/>
</dbReference>
<dbReference type="CDD" id="cd05015">
    <property type="entry name" value="SIS_PGI_1"/>
    <property type="match status" value="1"/>
</dbReference>
<dbReference type="CDD" id="cd05016">
    <property type="entry name" value="SIS_PGI_2"/>
    <property type="match status" value="1"/>
</dbReference>
<dbReference type="FunFam" id="1.10.1390.10:FF:000002">
    <property type="entry name" value="Glucose-6-phosphate isomerase"/>
    <property type="match status" value="1"/>
</dbReference>
<dbReference type="FunFam" id="3.40.50.10490:FF:000018">
    <property type="entry name" value="Glucose-6-phosphate isomerase"/>
    <property type="match status" value="1"/>
</dbReference>
<dbReference type="FunFam" id="3.40.50.10490:FF:000031">
    <property type="entry name" value="Glucose-6-phosphate isomerase"/>
    <property type="match status" value="1"/>
</dbReference>
<dbReference type="FunFam" id="3.40.50.10490:FF:000048">
    <property type="entry name" value="Glucose-6-phosphate isomerase"/>
    <property type="match status" value="1"/>
</dbReference>
<dbReference type="Gene3D" id="1.10.1390.10">
    <property type="match status" value="1"/>
</dbReference>
<dbReference type="Gene3D" id="3.40.50.10490">
    <property type="entry name" value="Glucose-6-phosphate isomerase like protein, domain 1"/>
    <property type="match status" value="3"/>
</dbReference>
<dbReference type="HAMAP" id="MF_00473">
    <property type="entry name" value="G6P_isomerase"/>
    <property type="match status" value="1"/>
</dbReference>
<dbReference type="InterPro" id="IPR001672">
    <property type="entry name" value="G6P_Isomerase"/>
</dbReference>
<dbReference type="InterPro" id="IPR023096">
    <property type="entry name" value="G6P_Isomerase_C"/>
</dbReference>
<dbReference type="InterPro" id="IPR018189">
    <property type="entry name" value="Phosphoglucose_isomerase_CS"/>
</dbReference>
<dbReference type="InterPro" id="IPR046348">
    <property type="entry name" value="SIS_dom_sf"/>
</dbReference>
<dbReference type="InterPro" id="IPR035476">
    <property type="entry name" value="SIS_PGI_1"/>
</dbReference>
<dbReference type="InterPro" id="IPR035482">
    <property type="entry name" value="SIS_PGI_2"/>
</dbReference>
<dbReference type="NCBIfam" id="NF001211">
    <property type="entry name" value="PRK00179.1"/>
    <property type="match status" value="1"/>
</dbReference>
<dbReference type="PANTHER" id="PTHR11469">
    <property type="entry name" value="GLUCOSE-6-PHOSPHATE ISOMERASE"/>
    <property type="match status" value="1"/>
</dbReference>
<dbReference type="PANTHER" id="PTHR11469:SF1">
    <property type="entry name" value="GLUCOSE-6-PHOSPHATE ISOMERASE"/>
    <property type="match status" value="1"/>
</dbReference>
<dbReference type="Pfam" id="PF00342">
    <property type="entry name" value="PGI"/>
    <property type="match status" value="1"/>
</dbReference>
<dbReference type="PRINTS" id="PR00662">
    <property type="entry name" value="G6PISOMERASE"/>
</dbReference>
<dbReference type="SUPFAM" id="SSF53697">
    <property type="entry name" value="SIS domain"/>
    <property type="match status" value="1"/>
</dbReference>
<dbReference type="PROSITE" id="PS00765">
    <property type="entry name" value="P_GLUCOSE_ISOMERASE_1"/>
    <property type="match status" value="1"/>
</dbReference>
<dbReference type="PROSITE" id="PS00174">
    <property type="entry name" value="P_GLUCOSE_ISOMERASE_2"/>
    <property type="match status" value="1"/>
</dbReference>
<dbReference type="PROSITE" id="PS51463">
    <property type="entry name" value="P_GLUCOSE_ISOMERASE_3"/>
    <property type="match status" value="1"/>
</dbReference>
<evidence type="ECO:0000250" key="1"/>
<evidence type="ECO:0000269" key="2">
    <source>
    </source>
</evidence>
<evidence type="ECO:0000305" key="3"/>
<evidence type="ECO:0007744" key="4">
    <source>
    </source>
</evidence>
<sequence length="560" mass="61718">MASSTALICDTEAWKDLKGHVEDIKKTHLRDLMSDANRCQSMMMEFDGLLLDYSRQRATVETMDKLLNLAKASQLTEKISRMFNGEHINSTENRSVLHVALRAPKDAVIKADGMNVVPEVWNVLDKIKEFSDKIRSGSWVGATGKPLKDVIAIGIGGSFLGPLFVHTALQTDPEALESAKGRQLRFLANIDPVDVARNISGLNPETTLVVVVSKTFTTAETMLNARTLREWITAALGASAVAKHMVAVSTNLALVEKFGIDPNNAFAFWDWVGGRYSVCSAVGVLPLSLQYGFSMVEKFLKGASSIDQHFQSTPFEKNIPVLLGLLSVWNVSFLGYPARAILPYSQALEKFAPHIQQVSMESNGKGVSIDGLPLPFETGEIDFGEPGTNGQHSFYQLIHQGRVIPCDFIGIVKSQQPVYLKGEVVSNHDELMSNFFAQPDALAYGKTPEQLQKENVSENLIPHKTFSGNRPSLSLLLPELTAYNVGQLLAIYEHRVAVQGFVWGINSFDQWGVELGKVLATQVRKQLHSSRTQGTAPEGFNYSTTTLLKRYLETSSEPQM</sequence>
<name>G6PI_ARATH</name>
<comment type="catalytic activity">
    <reaction>
        <text>alpha-D-glucose 6-phosphate = beta-D-fructose 6-phosphate</text>
        <dbReference type="Rhea" id="RHEA:11816"/>
        <dbReference type="ChEBI" id="CHEBI:57634"/>
        <dbReference type="ChEBI" id="CHEBI:58225"/>
        <dbReference type="EC" id="5.3.1.9"/>
    </reaction>
</comment>
<comment type="activity regulation">
    <text evidence="2">Inhibited by glycerol-3-P (G3P).</text>
</comment>
<comment type="pathway">
    <text>Carbohydrate degradation; glycolysis; D-glyceraldehyde 3-phosphate and glycerone phosphate from D-glucose: step 2/4.</text>
</comment>
<comment type="subunit">
    <text evidence="1">Homodimer.</text>
</comment>
<comment type="subcellular location">
    <subcellularLocation>
        <location>Cytoplasm</location>
    </subcellularLocation>
</comment>
<comment type="polymorphism">
    <text>Was sequenced in many cultivars; Ag-0, Bl-1, Bus-1, Ci-0, Cvi-0, Dra-0, Edi-0, Hau-0, Hiroshima, In-0, Ita-0, Kas-1, Mr-0, Nok-4, Ost-0, Pog-0, Rou-0, Su-0, Ts-1 and Ws-0.</text>
</comment>
<comment type="similarity">
    <text evidence="3">Belongs to the GPI family.</text>
</comment>
<gene>
    <name type="primary">PGIC</name>
    <name type="ordered locus">At5g42740</name>
    <name type="ORF">MJB21.12</name>
</gene>
<keyword id="KW-0007">Acetylation</keyword>
<keyword id="KW-0963">Cytoplasm</keyword>
<keyword id="KW-0312">Gluconeogenesis</keyword>
<keyword id="KW-0324">Glycolysis</keyword>
<keyword id="KW-0413">Isomerase</keyword>
<keyword id="KW-1185">Reference proteome</keyword>
<organism>
    <name type="scientific">Arabidopsis thaliana</name>
    <name type="common">Mouse-ear cress</name>
    <dbReference type="NCBI Taxonomy" id="3702"/>
    <lineage>
        <taxon>Eukaryota</taxon>
        <taxon>Viridiplantae</taxon>
        <taxon>Streptophyta</taxon>
        <taxon>Embryophyta</taxon>
        <taxon>Tracheophyta</taxon>
        <taxon>Spermatophyta</taxon>
        <taxon>Magnoliopsida</taxon>
        <taxon>eudicotyledons</taxon>
        <taxon>Gunneridae</taxon>
        <taxon>Pentapetalae</taxon>
        <taxon>rosids</taxon>
        <taxon>malvids</taxon>
        <taxon>Brassicales</taxon>
        <taxon>Brassicaceae</taxon>
        <taxon>Camelineae</taxon>
        <taxon>Arabidopsis</taxon>
    </lineage>
</organism>